<name>ROT1_BOTFB</name>
<gene>
    <name type="primary">rot1</name>
    <name type="ORF">BC1G_07283</name>
    <name type="ORF">BCIN_07g04300</name>
</gene>
<dbReference type="EMBL" id="CP009811">
    <property type="protein sequence ID" value="ATZ51873.1"/>
    <property type="status" value="ALT_INIT"/>
    <property type="molecule type" value="Genomic_DNA"/>
</dbReference>
<dbReference type="RefSeq" id="XP_001554146.1">
    <property type="nucleotide sequence ID" value="XM_001554096.1"/>
</dbReference>
<dbReference type="GlyCosmos" id="A6S3W1">
    <property type="glycosylation" value="2 sites, No reported glycans"/>
</dbReference>
<dbReference type="EnsemblFungi" id="Bcin07g04300.1">
    <property type="protein sequence ID" value="Bcin07p04300.1"/>
    <property type="gene ID" value="Bcin07g04300"/>
</dbReference>
<dbReference type="GeneID" id="5434698"/>
<dbReference type="KEGG" id="bfu:BCIN_07g04300"/>
<dbReference type="VEuPathDB" id="FungiDB:Bcin07g04300"/>
<dbReference type="OMA" id="YKPPQML"/>
<dbReference type="OrthoDB" id="5327821at2759"/>
<dbReference type="Proteomes" id="UP000001798">
    <property type="component" value="Chromosome bcin07"/>
</dbReference>
<dbReference type="GO" id="GO:0005789">
    <property type="term" value="C:endoplasmic reticulum membrane"/>
    <property type="evidence" value="ECO:0007669"/>
    <property type="project" value="UniProtKB-SubCell"/>
</dbReference>
<dbReference type="GO" id="GO:0051082">
    <property type="term" value="F:unfolded protein binding"/>
    <property type="evidence" value="ECO:0007669"/>
    <property type="project" value="TreeGrafter"/>
</dbReference>
<dbReference type="GO" id="GO:0006458">
    <property type="term" value="P:'de novo' protein folding"/>
    <property type="evidence" value="ECO:0007669"/>
    <property type="project" value="InterPro"/>
</dbReference>
<dbReference type="InterPro" id="IPR019623">
    <property type="entry name" value="Rot1"/>
</dbReference>
<dbReference type="PANTHER" id="PTHR28090">
    <property type="entry name" value="PROTEIN ROT1"/>
    <property type="match status" value="1"/>
</dbReference>
<dbReference type="PANTHER" id="PTHR28090:SF1">
    <property type="entry name" value="PROTEIN ROT1"/>
    <property type="match status" value="1"/>
</dbReference>
<dbReference type="Pfam" id="PF10681">
    <property type="entry name" value="Rot1"/>
    <property type="match status" value="1"/>
</dbReference>
<dbReference type="PIRSF" id="PIRSF017290">
    <property type="entry name" value="ROT1_prd"/>
    <property type="match status" value="1"/>
</dbReference>
<organism>
    <name type="scientific">Botryotinia fuckeliana (strain B05.10)</name>
    <name type="common">Noble rot fungus</name>
    <name type="synonym">Botrytis cinerea</name>
    <dbReference type="NCBI Taxonomy" id="332648"/>
    <lineage>
        <taxon>Eukaryota</taxon>
        <taxon>Fungi</taxon>
        <taxon>Dikarya</taxon>
        <taxon>Ascomycota</taxon>
        <taxon>Pezizomycotina</taxon>
        <taxon>Leotiomycetes</taxon>
        <taxon>Helotiales</taxon>
        <taxon>Sclerotiniaceae</taxon>
        <taxon>Botrytis</taxon>
    </lineage>
</organism>
<feature type="signal peptide" evidence="2">
    <location>
        <begin position="1"/>
        <end position="22"/>
    </location>
</feature>
<feature type="chain" id="PRO_0000333406" description="Protein rot1">
    <location>
        <begin position="23"/>
        <end position="264"/>
    </location>
</feature>
<feature type="topological domain" description="Lumenal" evidence="2">
    <location>
        <begin position="23"/>
        <end position="243"/>
    </location>
</feature>
<feature type="transmembrane region" description="Helical" evidence="2">
    <location>
        <begin position="244"/>
        <end position="264"/>
    </location>
</feature>
<feature type="glycosylation site" description="N-linked (GlcNAc...) asparagine" evidence="2">
    <location>
        <position position="51"/>
    </location>
</feature>
<feature type="glycosylation site" description="N-linked (GlcNAc...) asparagine" evidence="2">
    <location>
        <position position="136"/>
    </location>
</feature>
<comment type="function">
    <text evidence="1">Required for normal levels of the cell wall 1,6-beta-glucan. Involved in a protein folding machinery chaperoning proteins acting in various physiological processes including cell wall synthesis and lysis of autophagic bodies (By similarity).</text>
</comment>
<comment type="subcellular location">
    <subcellularLocation>
        <location evidence="1">Endoplasmic reticulum membrane</location>
        <topology evidence="1">Single-pass type I membrane protein</topology>
    </subcellularLocation>
</comment>
<comment type="similarity">
    <text evidence="3">Belongs to the ROT1 family.</text>
</comment>
<comment type="sequence caution" evidence="3">
    <conflict type="erroneous initiation">
        <sequence resource="EMBL-CDS" id="ATZ51873"/>
    </conflict>
    <text>Extended N-terminus.</text>
</comment>
<reference key="1">
    <citation type="journal article" date="2011" name="PLoS Genet.">
        <title>Genomic analysis of the necrotrophic fungal pathogens Sclerotinia sclerotiorum and Botrytis cinerea.</title>
        <authorList>
            <person name="Amselem J."/>
            <person name="Cuomo C.A."/>
            <person name="van Kan J.A.L."/>
            <person name="Viaud M."/>
            <person name="Benito E.P."/>
            <person name="Couloux A."/>
            <person name="Coutinho P.M."/>
            <person name="de Vries R.P."/>
            <person name="Dyer P.S."/>
            <person name="Fillinger S."/>
            <person name="Fournier E."/>
            <person name="Gout L."/>
            <person name="Hahn M."/>
            <person name="Kohn L."/>
            <person name="Lapalu N."/>
            <person name="Plummer K.M."/>
            <person name="Pradier J.-M."/>
            <person name="Quevillon E."/>
            <person name="Sharon A."/>
            <person name="Simon A."/>
            <person name="ten Have A."/>
            <person name="Tudzynski B."/>
            <person name="Tudzynski P."/>
            <person name="Wincker P."/>
            <person name="Andrew M."/>
            <person name="Anthouard V."/>
            <person name="Beever R.E."/>
            <person name="Beffa R."/>
            <person name="Benoit I."/>
            <person name="Bouzid O."/>
            <person name="Brault B."/>
            <person name="Chen Z."/>
            <person name="Choquer M."/>
            <person name="Collemare J."/>
            <person name="Cotton P."/>
            <person name="Danchin E.G."/>
            <person name="Da Silva C."/>
            <person name="Gautier A."/>
            <person name="Giraud C."/>
            <person name="Giraud T."/>
            <person name="Gonzalez C."/>
            <person name="Grossetete S."/>
            <person name="Gueldener U."/>
            <person name="Henrissat B."/>
            <person name="Howlett B.J."/>
            <person name="Kodira C."/>
            <person name="Kretschmer M."/>
            <person name="Lappartient A."/>
            <person name="Leroch M."/>
            <person name="Levis C."/>
            <person name="Mauceli E."/>
            <person name="Neuveglise C."/>
            <person name="Oeser B."/>
            <person name="Pearson M."/>
            <person name="Poulain J."/>
            <person name="Poussereau N."/>
            <person name="Quesneville H."/>
            <person name="Rascle C."/>
            <person name="Schumacher J."/>
            <person name="Segurens B."/>
            <person name="Sexton A."/>
            <person name="Silva E."/>
            <person name="Sirven C."/>
            <person name="Soanes D.M."/>
            <person name="Talbot N.J."/>
            <person name="Templeton M."/>
            <person name="Yandava C."/>
            <person name="Yarden O."/>
            <person name="Zeng Q."/>
            <person name="Rollins J.A."/>
            <person name="Lebrun M.-H."/>
            <person name="Dickman M."/>
        </authorList>
    </citation>
    <scope>NUCLEOTIDE SEQUENCE [LARGE SCALE GENOMIC DNA]</scope>
    <source>
        <strain>B05.10</strain>
    </source>
</reference>
<reference key="2">
    <citation type="journal article" date="2012" name="Eukaryot. Cell">
        <title>Genome update of Botrytis cinerea strains B05.10 and T4.</title>
        <authorList>
            <person name="Staats M."/>
            <person name="van Kan J.A.L."/>
        </authorList>
    </citation>
    <scope>NUCLEOTIDE SEQUENCE [LARGE SCALE GENOMIC DNA]</scope>
    <scope>GENOME REANNOTATION</scope>
    <source>
        <strain>B05.10</strain>
    </source>
</reference>
<reference key="3">
    <citation type="journal article" date="2017" name="Mol. Plant Pathol.">
        <title>A gapless genome sequence of the fungus Botrytis cinerea.</title>
        <authorList>
            <person name="van Kan J.A.L."/>
            <person name="Stassen J.H.M."/>
            <person name="Mosbach A."/>
            <person name="van der Lee T.A.J."/>
            <person name="Faino L."/>
            <person name="Farmer A.D."/>
            <person name="Papasotiriou D.G."/>
            <person name="Zhou S."/>
            <person name="Seidl M.F."/>
            <person name="Cottam E."/>
            <person name="Edel D."/>
            <person name="Hahn M."/>
            <person name="Schwartz D.C."/>
            <person name="Dietrich R.A."/>
            <person name="Widdison S."/>
            <person name="Scalliet G."/>
        </authorList>
    </citation>
    <scope>NUCLEOTIDE SEQUENCE [LARGE SCALE GENOMIC DNA]</scope>
    <scope>GENOME REANNOTATION</scope>
    <source>
        <strain>B05.10</strain>
    </source>
</reference>
<evidence type="ECO:0000250" key="1"/>
<evidence type="ECO:0000255" key="2"/>
<evidence type="ECO:0000305" key="3"/>
<accession>A6S3W1</accession>
<accession>A0A384JMT9</accession>
<protein>
    <recommendedName>
        <fullName>Protein rot1</fullName>
    </recommendedName>
</protein>
<keyword id="KW-0256">Endoplasmic reticulum</keyword>
<keyword id="KW-0325">Glycoprotein</keyword>
<keyword id="KW-0472">Membrane</keyword>
<keyword id="KW-1185">Reference proteome</keyword>
<keyword id="KW-0732">Signal</keyword>
<keyword id="KW-0812">Transmembrane</keyword>
<keyword id="KW-1133">Transmembrane helix</keyword>
<sequence>MAPLVLPSVLIASAYLLSTVSAEPNVAELVGTWSTKSAAVLTGPGFYNPVNDTLLEPTHTGISYSFTEDGYYEEAYYRAVSNPAKPSCVSSIMQWQHGKFVLNADGSLSLSPFSVDGRQLQSAPCTADSATYTRYNQSETLQKYQVYTDPYTKLTRLDLYQFDGTPVNPMFLAYSPALMLPTETLNPTTSATSTSSSKMKRWLGYGDEPEEPTTSEGYLLPLNRNAKHISRGIEQPSLINRIDLDLVWWAGVGLTIFGGAAYLL</sequence>
<proteinExistence type="inferred from homology"/>